<proteinExistence type="inferred from homology"/>
<keyword id="KW-0007">Acetylation</keyword>
<keyword id="KW-0113">Calvin cycle</keyword>
<keyword id="KW-0120">Carbon dioxide fixation</keyword>
<keyword id="KW-0150">Chloroplast</keyword>
<keyword id="KW-1015">Disulfide bond</keyword>
<keyword id="KW-0456">Lyase</keyword>
<keyword id="KW-0460">Magnesium</keyword>
<keyword id="KW-0479">Metal-binding</keyword>
<keyword id="KW-0488">Methylation</keyword>
<keyword id="KW-0503">Monooxygenase</keyword>
<keyword id="KW-0560">Oxidoreductase</keyword>
<keyword id="KW-0601">Photorespiration</keyword>
<keyword id="KW-0602">Photosynthesis</keyword>
<keyword id="KW-0934">Plastid</keyword>
<geneLocation type="chloroplast"/>
<sequence>MSPQTETKASVGFKAGVKDYKLTYYTPEYETKDTDILAAFRVTPQLGVPPEEAGAAVAAESSTGTWTTVWTDGLTSLDRYKGRCYHIEPVPGDPDQYICYVAYPLDLFEEGSVTNMFTSIVGNVFGFKALRALRLEDLRIPPAYVKTFQGPPHGIQVERDKLNKYGRPLLGCTIKPKLGLSAKNYGRACYECLRGGLDFTKDDENVNSQPFMRWRDRFVFCAEAIYKAQAETGEIKGHYLNATAGTCEEMIKRAVFAKELGVPIVMHDYLTGGFTANTTLSHYCRDNGLLLHIHRAMHAVIDRQKNHGMHFRVLAKALRMSGGDHIHSGTVVGKLEGEREITLGFVDLLRDDFIEKDRSRGIFFTQDWVSMPGVIPVASGGIHVWHMPALTEIFGDDSVLQFGGGTLGHPWGNAPGAAANRVALEACVQARNEGRDLAREGNEIIKAACKWSAELAAACEIWKEIKFDTFKAMDTL</sequence>
<gene>
    <name evidence="1" type="primary">rbcL</name>
    <name type="ordered locus">PS131</name>
</gene>
<comment type="function">
    <text evidence="1">RuBisCO catalyzes two reactions: the carboxylation of D-ribulose 1,5-bisphosphate, the primary event in carbon dioxide fixation, as well as the oxidative fragmentation of the pentose substrate in the photorespiration process. Both reactions occur simultaneously and in competition at the same active site.</text>
</comment>
<comment type="catalytic activity">
    <reaction evidence="1">
        <text>2 (2R)-3-phosphoglycerate + 2 H(+) = D-ribulose 1,5-bisphosphate + CO2 + H2O</text>
        <dbReference type="Rhea" id="RHEA:23124"/>
        <dbReference type="ChEBI" id="CHEBI:15377"/>
        <dbReference type="ChEBI" id="CHEBI:15378"/>
        <dbReference type="ChEBI" id="CHEBI:16526"/>
        <dbReference type="ChEBI" id="CHEBI:57870"/>
        <dbReference type="ChEBI" id="CHEBI:58272"/>
        <dbReference type="EC" id="4.1.1.39"/>
    </reaction>
</comment>
<comment type="catalytic activity">
    <reaction evidence="1">
        <text>D-ribulose 1,5-bisphosphate + O2 = 2-phosphoglycolate + (2R)-3-phosphoglycerate + 2 H(+)</text>
        <dbReference type="Rhea" id="RHEA:36631"/>
        <dbReference type="ChEBI" id="CHEBI:15378"/>
        <dbReference type="ChEBI" id="CHEBI:15379"/>
        <dbReference type="ChEBI" id="CHEBI:57870"/>
        <dbReference type="ChEBI" id="CHEBI:58033"/>
        <dbReference type="ChEBI" id="CHEBI:58272"/>
    </reaction>
</comment>
<comment type="cofactor">
    <cofactor evidence="1">
        <name>Mg(2+)</name>
        <dbReference type="ChEBI" id="CHEBI:18420"/>
    </cofactor>
    <text evidence="1">Binds 1 Mg(2+) ion per subunit.</text>
</comment>
<comment type="subunit">
    <text evidence="1">Heterohexadecamer of 8 large chains and 8 small chains; disulfide-linked. The disulfide link is formed within the large subunit homodimers.</text>
</comment>
<comment type="subcellular location">
    <subcellularLocation>
        <location>Plastid</location>
        <location>Chloroplast</location>
    </subcellularLocation>
</comment>
<comment type="PTM">
    <text evidence="1">The disulfide bond which can form in the large chain dimeric partners within the hexadecamer appears to be associated with oxidative stress and protein turnover.</text>
</comment>
<comment type="miscellaneous">
    <text evidence="1">The basic functional RuBisCO is composed of a large chain homodimer in a 'head-to-tail' conformation. In form I RuBisCO this homodimer is arranged in a barrel-like tetramer with the small subunits forming a tetrameric 'cap' on each end of the 'barrel'.</text>
</comment>
<comment type="similarity">
    <text evidence="1">Belongs to the RuBisCO large chain family. Type I subfamily.</text>
</comment>
<accession>Q6L391</accession>
<protein>
    <recommendedName>
        <fullName evidence="1">Ribulose bisphosphate carboxylase large chain</fullName>
        <shortName evidence="1">RuBisCO large subunit</shortName>
        <ecNumber evidence="1">4.1.1.39</ecNumber>
    </recommendedName>
</protein>
<evidence type="ECO:0000255" key="1">
    <source>
        <dbReference type="HAMAP-Rule" id="MF_01338"/>
    </source>
</evidence>
<name>RBL_SACHY</name>
<dbReference type="EC" id="4.1.1.39" evidence="1"/>
<dbReference type="EMBL" id="AE009947">
    <property type="protein sequence ID" value="AAT44701.1"/>
    <property type="molecule type" value="Genomic_DNA"/>
</dbReference>
<dbReference type="SMR" id="Q6L391"/>
<dbReference type="GO" id="GO:0009507">
    <property type="term" value="C:chloroplast"/>
    <property type="evidence" value="ECO:0007669"/>
    <property type="project" value="UniProtKB-SubCell"/>
</dbReference>
<dbReference type="GO" id="GO:0000287">
    <property type="term" value="F:magnesium ion binding"/>
    <property type="evidence" value="ECO:0007669"/>
    <property type="project" value="UniProtKB-UniRule"/>
</dbReference>
<dbReference type="GO" id="GO:0004497">
    <property type="term" value="F:monooxygenase activity"/>
    <property type="evidence" value="ECO:0007669"/>
    <property type="project" value="UniProtKB-KW"/>
</dbReference>
<dbReference type="GO" id="GO:0016984">
    <property type="term" value="F:ribulose-bisphosphate carboxylase activity"/>
    <property type="evidence" value="ECO:0007669"/>
    <property type="project" value="UniProtKB-UniRule"/>
</dbReference>
<dbReference type="GO" id="GO:0009853">
    <property type="term" value="P:photorespiration"/>
    <property type="evidence" value="ECO:0007669"/>
    <property type="project" value="UniProtKB-KW"/>
</dbReference>
<dbReference type="GO" id="GO:0019253">
    <property type="term" value="P:reductive pentose-phosphate cycle"/>
    <property type="evidence" value="ECO:0007669"/>
    <property type="project" value="UniProtKB-UniRule"/>
</dbReference>
<dbReference type="CDD" id="cd08212">
    <property type="entry name" value="RuBisCO_large_I"/>
    <property type="match status" value="1"/>
</dbReference>
<dbReference type="FunFam" id="3.20.20.110:FF:000001">
    <property type="entry name" value="Ribulose bisphosphate carboxylase large chain"/>
    <property type="match status" value="1"/>
</dbReference>
<dbReference type="FunFam" id="3.30.70.150:FF:000001">
    <property type="entry name" value="Ribulose bisphosphate carboxylase large chain"/>
    <property type="match status" value="1"/>
</dbReference>
<dbReference type="Gene3D" id="3.20.20.110">
    <property type="entry name" value="Ribulose bisphosphate carboxylase, large subunit, C-terminal domain"/>
    <property type="match status" value="1"/>
</dbReference>
<dbReference type="Gene3D" id="3.30.70.150">
    <property type="entry name" value="RuBisCO large subunit, N-terminal domain"/>
    <property type="match status" value="1"/>
</dbReference>
<dbReference type="HAMAP" id="MF_01338">
    <property type="entry name" value="RuBisCO_L_type1"/>
    <property type="match status" value="1"/>
</dbReference>
<dbReference type="InterPro" id="IPR033966">
    <property type="entry name" value="RuBisCO"/>
</dbReference>
<dbReference type="InterPro" id="IPR020878">
    <property type="entry name" value="RuBisCo_large_chain_AS"/>
</dbReference>
<dbReference type="InterPro" id="IPR000685">
    <property type="entry name" value="RuBisCO_lsu_C"/>
</dbReference>
<dbReference type="InterPro" id="IPR036376">
    <property type="entry name" value="RuBisCO_lsu_C_sf"/>
</dbReference>
<dbReference type="InterPro" id="IPR017443">
    <property type="entry name" value="RuBisCO_lsu_fd_N"/>
</dbReference>
<dbReference type="InterPro" id="IPR036422">
    <property type="entry name" value="RuBisCO_lsu_N_sf"/>
</dbReference>
<dbReference type="InterPro" id="IPR020888">
    <property type="entry name" value="RuBisCO_lsuI"/>
</dbReference>
<dbReference type="NCBIfam" id="NF003252">
    <property type="entry name" value="PRK04208.1"/>
    <property type="match status" value="1"/>
</dbReference>
<dbReference type="PANTHER" id="PTHR42704">
    <property type="entry name" value="RIBULOSE BISPHOSPHATE CARBOXYLASE"/>
    <property type="match status" value="1"/>
</dbReference>
<dbReference type="PANTHER" id="PTHR42704:SF20">
    <property type="entry name" value="RIBULOSE BISPHOSPHATE CARBOXYLASE LARGE CHAIN"/>
    <property type="match status" value="1"/>
</dbReference>
<dbReference type="Pfam" id="PF00016">
    <property type="entry name" value="RuBisCO_large"/>
    <property type="match status" value="1"/>
</dbReference>
<dbReference type="Pfam" id="PF02788">
    <property type="entry name" value="RuBisCO_large_N"/>
    <property type="match status" value="1"/>
</dbReference>
<dbReference type="SFLD" id="SFLDG01052">
    <property type="entry name" value="RuBisCO"/>
    <property type="match status" value="1"/>
</dbReference>
<dbReference type="SFLD" id="SFLDS00014">
    <property type="entry name" value="RuBisCO"/>
    <property type="match status" value="1"/>
</dbReference>
<dbReference type="SFLD" id="SFLDG00301">
    <property type="entry name" value="RuBisCO-like_proteins"/>
    <property type="match status" value="1"/>
</dbReference>
<dbReference type="SUPFAM" id="SSF51649">
    <property type="entry name" value="RuBisCo, C-terminal domain"/>
    <property type="match status" value="1"/>
</dbReference>
<dbReference type="SUPFAM" id="SSF54966">
    <property type="entry name" value="RuBisCO, large subunit, small (N-terminal) domain"/>
    <property type="match status" value="1"/>
</dbReference>
<dbReference type="PROSITE" id="PS00157">
    <property type="entry name" value="RUBISCO_LARGE"/>
    <property type="match status" value="1"/>
</dbReference>
<reference key="1">
    <citation type="journal article" date="2004" name="Curr. Genet.">
        <title>Structural features and transcript-editing analysis of sugarcane (Saccharum officinarum L.) chloroplast genome.</title>
        <authorList>
            <person name="Calsa T. Jr."/>
            <person name="Carraro D.M."/>
            <person name="Benatti M.R."/>
            <person name="Barbosa A.C."/>
            <person name="Kitajima J.P."/>
            <person name="Carrer H."/>
        </authorList>
    </citation>
    <scope>NUCLEOTIDE SEQUENCE [LARGE SCALE GENOMIC DNA]</scope>
    <source>
        <strain>cv. SP-80-3280</strain>
    </source>
</reference>
<organism>
    <name type="scientific">Saccharum hybrid</name>
    <name type="common">Sugarcane</name>
    <dbReference type="NCBI Taxonomy" id="15819"/>
    <lineage>
        <taxon>Eukaryota</taxon>
        <taxon>Viridiplantae</taxon>
        <taxon>Streptophyta</taxon>
        <taxon>Embryophyta</taxon>
        <taxon>Tracheophyta</taxon>
        <taxon>Spermatophyta</taxon>
        <taxon>Magnoliopsida</taxon>
        <taxon>Liliopsida</taxon>
        <taxon>Poales</taxon>
        <taxon>Poaceae</taxon>
        <taxon>PACMAD clade</taxon>
        <taxon>Panicoideae</taxon>
        <taxon>Andropogonodae</taxon>
        <taxon>Andropogoneae</taxon>
        <taxon>Saccharinae</taxon>
        <taxon>Saccharum</taxon>
    </lineage>
</organism>
<feature type="propeptide" id="PRO_0000042917" evidence="1">
    <location>
        <begin position="1"/>
        <end position="2"/>
    </location>
</feature>
<feature type="chain" id="PRO_0000042918" description="Ribulose bisphosphate carboxylase large chain">
    <location>
        <begin position="3"/>
        <end position="476"/>
    </location>
</feature>
<feature type="active site" description="Proton acceptor" evidence="1">
    <location>
        <position position="175"/>
    </location>
</feature>
<feature type="active site" description="Proton acceptor" evidence="1">
    <location>
        <position position="294"/>
    </location>
</feature>
<feature type="binding site" description="in homodimeric partner" evidence="1">
    <location>
        <position position="123"/>
    </location>
    <ligand>
        <name>substrate</name>
    </ligand>
</feature>
<feature type="binding site" evidence="1">
    <location>
        <position position="173"/>
    </location>
    <ligand>
        <name>substrate</name>
    </ligand>
</feature>
<feature type="binding site" evidence="1">
    <location>
        <position position="177"/>
    </location>
    <ligand>
        <name>substrate</name>
    </ligand>
</feature>
<feature type="binding site" description="via carbamate group" evidence="1">
    <location>
        <position position="201"/>
    </location>
    <ligand>
        <name>Mg(2+)</name>
        <dbReference type="ChEBI" id="CHEBI:18420"/>
    </ligand>
</feature>
<feature type="binding site" evidence="1">
    <location>
        <position position="203"/>
    </location>
    <ligand>
        <name>Mg(2+)</name>
        <dbReference type="ChEBI" id="CHEBI:18420"/>
    </ligand>
</feature>
<feature type="binding site" evidence="1">
    <location>
        <position position="204"/>
    </location>
    <ligand>
        <name>Mg(2+)</name>
        <dbReference type="ChEBI" id="CHEBI:18420"/>
    </ligand>
</feature>
<feature type="binding site" evidence="1">
    <location>
        <position position="295"/>
    </location>
    <ligand>
        <name>substrate</name>
    </ligand>
</feature>
<feature type="binding site" evidence="1">
    <location>
        <position position="327"/>
    </location>
    <ligand>
        <name>substrate</name>
    </ligand>
</feature>
<feature type="binding site" evidence="1">
    <location>
        <position position="379"/>
    </location>
    <ligand>
        <name>substrate</name>
    </ligand>
</feature>
<feature type="site" description="Transition state stabilizer" evidence="1">
    <location>
        <position position="334"/>
    </location>
</feature>
<feature type="modified residue" description="N-acetylproline" evidence="1">
    <location>
        <position position="3"/>
    </location>
</feature>
<feature type="modified residue" description="N6,N6,N6-trimethyllysine" evidence="1">
    <location>
        <position position="14"/>
    </location>
</feature>
<feature type="modified residue" description="N6-carboxylysine" evidence="1">
    <location>
        <position position="201"/>
    </location>
</feature>
<feature type="disulfide bond" description="Interchain; in linked form" evidence="1">
    <location>
        <position position="247"/>
    </location>
</feature>